<gene>
    <name type="primary">vps35</name>
    <name type="ORF">DDB_G0293218</name>
</gene>
<feature type="chain" id="PRO_0000328329" description="Vacuolar protein sorting-associated protein 35">
    <location>
        <begin position="1"/>
        <end position="781"/>
    </location>
</feature>
<accession>Q54C24</accession>
<evidence type="ECO:0000250" key="1"/>
<evidence type="ECO:0000305" key="2"/>
<organism>
    <name type="scientific">Dictyostelium discoideum</name>
    <name type="common">Social amoeba</name>
    <dbReference type="NCBI Taxonomy" id="44689"/>
    <lineage>
        <taxon>Eukaryota</taxon>
        <taxon>Amoebozoa</taxon>
        <taxon>Evosea</taxon>
        <taxon>Eumycetozoa</taxon>
        <taxon>Dictyostelia</taxon>
        <taxon>Dictyosteliales</taxon>
        <taxon>Dictyosteliaceae</taxon>
        <taxon>Dictyostelium</taxon>
    </lineage>
</organism>
<reference key="1">
    <citation type="journal article" date="2005" name="Nature">
        <title>The genome of the social amoeba Dictyostelium discoideum.</title>
        <authorList>
            <person name="Eichinger L."/>
            <person name="Pachebat J.A."/>
            <person name="Gloeckner G."/>
            <person name="Rajandream M.A."/>
            <person name="Sucgang R."/>
            <person name="Berriman M."/>
            <person name="Song J."/>
            <person name="Olsen R."/>
            <person name="Szafranski K."/>
            <person name="Xu Q."/>
            <person name="Tunggal B."/>
            <person name="Kummerfeld S."/>
            <person name="Madera M."/>
            <person name="Konfortov B.A."/>
            <person name="Rivero F."/>
            <person name="Bankier A.T."/>
            <person name="Lehmann R."/>
            <person name="Hamlin N."/>
            <person name="Davies R."/>
            <person name="Gaudet P."/>
            <person name="Fey P."/>
            <person name="Pilcher K."/>
            <person name="Chen G."/>
            <person name="Saunders D."/>
            <person name="Sodergren E.J."/>
            <person name="Davis P."/>
            <person name="Kerhornou A."/>
            <person name="Nie X."/>
            <person name="Hall N."/>
            <person name="Anjard C."/>
            <person name="Hemphill L."/>
            <person name="Bason N."/>
            <person name="Farbrother P."/>
            <person name="Desany B."/>
            <person name="Just E."/>
            <person name="Morio T."/>
            <person name="Rost R."/>
            <person name="Churcher C.M."/>
            <person name="Cooper J."/>
            <person name="Haydock S."/>
            <person name="van Driessche N."/>
            <person name="Cronin A."/>
            <person name="Goodhead I."/>
            <person name="Muzny D.M."/>
            <person name="Mourier T."/>
            <person name="Pain A."/>
            <person name="Lu M."/>
            <person name="Harper D."/>
            <person name="Lindsay R."/>
            <person name="Hauser H."/>
            <person name="James K.D."/>
            <person name="Quiles M."/>
            <person name="Madan Babu M."/>
            <person name="Saito T."/>
            <person name="Buchrieser C."/>
            <person name="Wardroper A."/>
            <person name="Felder M."/>
            <person name="Thangavelu M."/>
            <person name="Johnson D."/>
            <person name="Knights A."/>
            <person name="Loulseged H."/>
            <person name="Mungall K.L."/>
            <person name="Oliver K."/>
            <person name="Price C."/>
            <person name="Quail M.A."/>
            <person name="Urushihara H."/>
            <person name="Hernandez J."/>
            <person name="Rabbinowitsch E."/>
            <person name="Steffen D."/>
            <person name="Sanders M."/>
            <person name="Ma J."/>
            <person name="Kohara Y."/>
            <person name="Sharp S."/>
            <person name="Simmonds M.N."/>
            <person name="Spiegler S."/>
            <person name="Tivey A."/>
            <person name="Sugano S."/>
            <person name="White B."/>
            <person name="Walker D."/>
            <person name="Woodward J.R."/>
            <person name="Winckler T."/>
            <person name="Tanaka Y."/>
            <person name="Shaulsky G."/>
            <person name="Schleicher M."/>
            <person name="Weinstock G.M."/>
            <person name="Rosenthal A."/>
            <person name="Cox E.C."/>
            <person name="Chisholm R.L."/>
            <person name="Gibbs R.A."/>
            <person name="Loomis W.F."/>
            <person name="Platzer M."/>
            <person name="Kay R.R."/>
            <person name="Williams J.G."/>
            <person name="Dear P.H."/>
            <person name="Noegel A.A."/>
            <person name="Barrell B.G."/>
            <person name="Kuspa A."/>
        </authorList>
    </citation>
    <scope>NUCLEOTIDE SEQUENCE [LARGE SCALE GENOMIC DNA]</scope>
    <source>
        <strain>AX4</strain>
    </source>
</reference>
<sequence length="781" mass="89077">MMKKNKPTVAQTLSPEEEQAKFFEEAKNNVMIQGHHMKLSLDNSKLMDALKYASNIINELRTSLLSPKSYYALYLVAFDYLQYLNTYLYEEKHGKKMIELYEVVQHAGNVLPRLYLLITVGSVYIKTKQAPAKDVLKDLIEMCRGVQHPTRGLFLRHYLSEVTKDKLPDIDSSVENGTVMDSIDFIIQNFTETNKLWVRMQHQAPTKDRERRENERLELRLLVGKNLSRLAQLDGVDQKTYSEVVLPKVVEQIINCKDKIAQQYLMEILIQVFPDEFHLATLDIILQTCAQLQSGVDVKTIIASLIDRLANFATRNADLVPDNIKIFDIFFNNVKEIIQARPNMELQDILGLHVSLLNLTLKCYPTNKDNANEVLGLCQSIIVNKAKEDINKPTCVKQIIQLLQIPLDVFKNVLVVLKLSNYQPLISCLSYNNRKKVSLDIVNNTINNSTIIEEPEAVNNLLETIQTLIKDEQDQPDMDDIDKEDFQEEQNKVASLIHLFDSEDPEKLFKIYIIARGHFGKGGPHRIRHTLVPLVFCSLRFIRNFKQQVDSGVISLDENKWIAIGSKIFTFVSETIKALADIKLADLSFRLYLQALQTFDHCGLVSRVKELAIKALLIFQEDIADFKAQVMALQLLISTLNSLSIPNEEIYESLAAQTIKQASRLLLPQDQAKLISTCSHLFWVDNPSRQYQNPDSVLQALKKALSIISNESSPGLGTFVDILNECLFYCDKETDAVPIQFVSDLVELIRTTHVKEADPALPYLQNTIKYIQSQNYKGISI</sequence>
<dbReference type="EMBL" id="AAFI02000200">
    <property type="protein sequence ID" value="EAL60808.1"/>
    <property type="molecule type" value="Genomic_DNA"/>
</dbReference>
<dbReference type="RefSeq" id="XP_629242.1">
    <property type="nucleotide sequence ID" value="XM_629240.1"/>
</dbReference>
<dbReference type="SMR" id="Q54C24"/>
<dbReference type="FunCoup" id="Q54C24">
    <property type="interactions" value="1239"/>
</dbReference>
<dbReference type="STRING" id="44689.Q54C24"/>
<dbReference type="PaxDb" id="44689-DDB0234193"/>
<dbReference type="EnsemblProtists" id="EAL60808">
    <property type="protein sequence ID" value="EAL60808"/>
    <property type="gene ID" value="DDB_G0293218"/>
</dbReference>
<dbReference type="GeneID" id="8629124"/>
<dbReference type="KEGG" id="ddi:DDB_G0293218"/>
<dbReference type="dictyBase" id="DDB_G0293218">
    <property type="gene designation" value="vps35"/>
</dbReference>
<dbReference type="VEuPathDB" id="AmoebaDB:DDB_G0293218"/>
<dbReference type="eggNOG" id="KOG1107">
    <property type="taxonomic scope" value="Eukaryota"/>
</dbReference>
<dbReference type="HOGENOM" id="CLU_005836_1_0_1"/>
<dbReference type="InParanoid" id="Q54C24"/>
<dbReference type="OMA" id="YERVQFC"/>
<dbReference type="PhylomeDB" id="Q54C24"/>
<dbReference type="Reactome" id="R-DDI-3238698">
    <property type="pathway name" value="WNT ligand biogenesis and trafficking"/>
</dbReference>
<dbReference type="PRO" id="PR:Q54C24"/>
<dbReference type="Proteomes" id="UP000002195">
    <property type="component" value="Chromosome 6"/>
</dbReference>
<dbReference type="GO" id="GO:0005829">
    <property type="term" value="C:cytosol"/>
    <property type="evidence" value="ECO:0007669"/>
    <property type="project" value="GOC"/>
</dbReference>
<dbReference type="GO" id="GO:0010008">
    <property type="term" value="C:endosome membrane"/>
    <property type="evidence" value="ECO:0007669"/>
    <property type="project" value="UniProtKB-SubCell"/>
</dbReference>
<dbReference type="GO" id="GO:0005770">
    <property type="term" value="C:late endosome"/>
    <property type="evidence" value="ECO:0000318"/>
    <property type="project" value="GO_Central"/>
</dbReference>
<dbReference type="GO" id="GO:0140220">
    <property type="term" value="C:pathogen-containing vacuole"/>
    <property type="evidence" value="ECO:0000314"/>
    <property type="project" value="dictyBase"/>
</dbReference>
<dbReference type="GO" id="GO:0030904">
    <property type="term" value="C:retromer complex"/>
    <property type="evidence" value="ECO:0000250"/>
    <property type="project" value="dictyBase"/>
</dbReference>
<dbReference type="GO" id="GO:0030906">
    <property type="term" value="C:retromer, cargo-selective complex"/>
    <property type="evidence" value="ECO:0007669"/>
    <property type="project" value="InterPro"/>
</dbReference>
<dbReference type="GO" id="GO:0006886">
    <property type="term" value="P:intracellular protein transport"/>
    <property type="evidence" value="ECO:0000318"/>
    <property type="project" value="GO_Central"/>
</dbReference>
<dbReference type="GO" id="GO:0045053">
    <property type="term" value="P:protein retention in Golgi apparatus"/>
    <property type="evidence" value="ECO:0000250"/>
    <property type="project" value="dictyBase"/>
</dbReference>
<dbReference type="GO" id="GO:0042147">
    <property type="term" value="P:retrograde transport, endosome to Golgi"/>
    <property type="evidence" value="ECO:0000250"/>
    <property type="project" value="dictyBase"/>
</dbReference>
<dbReference type="Gene3D" id="1.25.40.660">
    <property type="entry name" value="Vacuolar protein sorting-associated protein 35, helical subcomplex Vps35-C"/>
    <property type="match status" value="1"/>
</dbReference>
<dbReference type="InterPro" id="IPR005378">
    <property type="entry name" value="Vps35"/>
</dbReference>
<dbReference type="InterPro" id="IPR042491">
    <property type="entry name" value="Vps35_C"/>
</dbReference>
<dbReference type="PANTHER" id="PTHR11099:SF0">
    <property type="entry name" value="VACUOLAR PROTEIN SORTING-ASSOCIATED PROTEIN 35"/>
    <property type="match status" value="1"/>
</dbReference>
<dbReference type="PANTHER" id="PTHR11099">
    <property type="entry name" value="VACUOLAR SORTING PROTEIN 35"/>
    <property type="match status" value="1"/>
</dbReference>
<dbReference type="Pfam" id="PF03635">
    <property type="entry name" value="Vps35"/>
    <property type="match status" value="1"/>
</dbReference>
<dbReference type="PIRSF" id="PIRSF009375">
    <property type="entry name" value="Retromer_Vps35"/>
    <property type="match status" value="1"/>
</dbReference>
<proteinExistence type="inferred from homology"/>
<protein>
    <recommendedName>
        <fullName>Vacuolar protein sorting-associated protein 35</fullName>
    </recommendedName>
</protein>
<keyword id="KW-0967">Endosome</keyword>
<keyword id="KW-0472">Membrane</keyword>
<keyword id="KW-0653">Protein transport</keyword>
<keyword id="KW-1185">Reference proteome</keyword>
<keyword id="KW-0813">Transport</keyword>
<name>VPS35_DICDI</name>
<comment type="function">
    <text evidence="1">Plays a role in vesicular protein sorting. Component of the membrane-associated retromer complex which is essential in endosome-to-Golgi retrograde transport. The vps29-vps26-vps35 subcomplex may be involved in cargo selection.</text>
</comment>
<comment type="subunit">
    <text evidence="1">Component of a retromer subcomplex consisting of vps29, vps26 and vps35.</text>
</comment>
<comment type="subcellular location">
    <subcellularLocation>
        <location evidence="1">Membrane</location>
        <topology evidence="1">Peripheral membrane protein</topology>
        <orientation evidence="1">Cytoplasmic side</orientation>
    </subcellularLocation>
    <subcellularLocation>
        <location evidence="2">Endosome membrane</location>
        <topology evidence="2">Peripheral membrane protein</topology>
        <orientation evidence="2">Cytoplasmic side</orientation>
    </subcellularLocation>
</comment>
<comment type="similarity">
    <text evidence="2">Belongs to the VPS35 family.</text>
</comment>